<organismHost>
    <name type="scientific">Escherichia coli</name>
    <dbReference type="NCBI Taxonomy" id="562"/>
</organismHost>
<dbReference type="EC" id="2.7.7.48" evidence="2"/>
<dbReference type="EMBL" id="V00642">
    <property type="protein sequence ID" value="CAA23991.1"/>
    <property type="molecule type" value="mRNA"/>
</dbReference>
<dbReference type="EMBL" id="M10565">
    <property type="protein sequence ID" value="AAA32263.1"/>
    <property type="molecule type" value="Genomic_RNA"/>
</dbReference>
<dbReference type="PIR" id="A00723">
    <property type="entry name" value="RRBPBM"/>
</dbReference>
<dbReference type="RefSeq" id="YP_009640127.1">
    <property type="nucleotide sequence ID" value="NC_001417.2"/>
</dbReference>
<dbReference type="SMR" id="P00585"/>
<dbReference type="GeneID" id="1260900"/>
<dbReference type="OrthoDB" id="10751at10239"/>
<dbReference type="Proteomes" id="UP000002127">
    <property type="component" value="Genome"/>
</dbReference>
<dbReference type="GO" id="GO:0000166">
    <property type="term" value="F:nucleotide binding"/>
    <property type="evidence" value="ECO:0007669"/>
    <property type="project" value="UniProtKB-KW"/>
</dbReference>
<dbReference type="GO" id="GO:0003968">
    <property type="term" value="F:RNA-directed RNA polymerase activity"/>
    <property type="evidence" value="ECO:0007669"/>
    <property type="project" value="UniProtKB-KW"/>
</dbReference>
<dbReference type="GO" id="GO:0039694">
    <property type="term" value="P:viral RNA genome replication"/>
    <property type="evidence" value="ECO:0007669"/>
    <property type="project" value="InterPro"/>
</dbReference>
<dbReference type="InterPro" id="IPR043502">
    <property type="entry name" value="DNA/RNA_pol_sf"/>
</dbReference>
<dbReference type="InterPro" id="IPR007096">
    <property type="entry name" value="RNA-dir_Rpol_cat_phage"/>
</dbReference>
<dbReference type="InterPro" id="IPR005093">
    <property type="entry name" value="RNArep_beta"/>
</dbReference>
<dbReference type="Pfam" id="PF03431">
    <property type="entry name" value="RNA_replicase_B"/>
    <property type="match status" value="1"/>
</dbReference>
<dbReference type="SUPFAM" id="SSF56672">
    <property type="entry name" value="DNA/RNA polymerases"/>
    <property type="match status" value="1"/>
</dbReference>
<dbReference type="PROSITE" id="PS50522">
    <property type="entry name" value="RDRP_PHAGE"/>
    <property type="match status" value="1"/>
</dbReference>
<comment type="function">
    <text evidence="2">This is the catalytic subunit of the viral RNA-dependent RNA polymerase complex. This complex is involved in viral RNA replication that produces (+)-stranded genomes via a complementary, (-)-stranded intermediate.</text>
</comment>
<comment type="catalytic activity">
    <reaction evidence="1 2">
        <text>RNA(n) + a ribonucleoside 5'-triphosphate = RNA(n+1) + diphosphate</text>
        <dbReference type="Rhea" id="RHEA:21248"/>
        <dbReference type="Rhea" id="RHEA-COMP:14527"/>
        <dbReference type="Rhea" id="RHEA-COMP:17342"/>
        <dbReference type="ChEBI" id="CHEBI:33019"/>
        <dbReference type="ChEBI" id="CHEBI:61557"/>
        <dbReference type="ChEBI" id="CHEBI:140395"/>
        <dbReference type="EC" id="2.7.7.48"/>
    </reaction>
</comment>
<comment type="subunit">
    <text evidence="3 4">Part of the viral RNA-dependent RNA polymerase complex, the other subunits are probably the host ribosomal protein S1, EF-Tu and EF-Ts.</text>
</comment>
<proteinExistence type="evidence at protein level"/>
<sequence length="545" mass="60837">MSKTTKKFNSLCIDLPRDLSLEIYQSIASVATGSGDPHSDDFTAIAYLRDELLTKHPTLGSGNDEATRRTLAIAKLREANGDRGQINREGFLHDKSLSWDPDVLQTSIRSLIGNLLSGYRSSLFGQCTFSNGAPMGHKLQDAAPYKKFAEQATVTPRALRAALLVRDQCAPWIRHAVRYNESYEFRLVVGNGVFTVPKNNKIDRAACKEPDMNMYLQKGVGAFIRRRLKSVGIDLNDQSINQRLAQQGSVDGSLATIDLSSASDSISDRLVWSFLPPELYSYLDRIRSHYGIVDGETIRWELFSTMGNGFTFELESMIFWAIVKATQIHFGNAGTIGIYGDDIICPSEIAPRVLEALAYYGFKPNLRKTFVSGLFRESCGAHFYRGVDVKPFYIKKPVDNLFALMLILNRLRGWGVVGGMSDPRLYKVWVRLSSQVPSMFFGGTDLAADYYVVSPPTAVSVYTKTPYGRLLADTRTSGFRLARIARERKFFSEKHDSGRYIAWFHTGGEITDSMKSAGVRVIRTSEWLTPVPTFPQECGPASSPR</sequence>
<accession>P00585</accession>
<reference key="1">
    <citation type="journal article" date="1976" name="Nature">
        <title>Complete nucleotide sequence of bacteriophage MS2 RNA: primary and secondary structure of the replicase gene.</title>
        <authorList>
            <person name="Fiers W."/>
            <person name="Contreras R."/>
            <person name="Duerinck F."/>
            <person name="Haegeman G."/>
            <person name="Iserentant D."/>
            <person name="Merregaert J."/>
            <person name="Min Jou W."/>
            <person name="Molemans F."/>
            <person name="Raeymaekers A."/>
            <person name="van den Berghe A."/>
            <person name="Volckaert G."/>
            <person name="Ysebaert M."/>
        </authorList>
    </citation>
    <scope>NUCLEOTIDE SEQUENCE [MRNA]</scope>
</reference>
<reference key="2">
    <citation type="journal article" date="1980" name="J. Mol. Biol.">
        <title>Studies on the bacteriophage MS2. XLI. Nature of the azure mutation.</title>
        <authorList>
            <person name="Iserentant D."/>
            <person name="van Montagu M."/>
            <person name="Fiers W."/>
        </authorList>
    </citation>
    <scope>NUCLEOTIDE SEQUENCE OF 488-545</scope>
</reference>
<reference key="3">
    <citation type="journal article" date="1974" name="Proc. Natl. Acad. Sci. U.S.A.">
        <title>An Escherichia coli mutant with an altered elongation factor Tu.</title>
        <authorList>
            <person name="Lupker J.H."/>
            <person name="Verschoor G.J."/>
            <person name="de Rooij F.W."/>
            <person name="Roersch A."/>
            <person name="Bosch L."/>
        </authorList>
    </citation>
    <scope>SUBUNIT</scope>
</reference>
<reference key="4">
    <citation type="journal article" date="1974" name="Proc. Natl. Acad. Sci. U.S.A.">
        <title>Interaction of Escherichia coli 30S ribosomal subunits with MS2 phage RNA in the absence of initiation factors.</title>
        <authorList>
            <person name="Szer W."/>
            <person name="Leffler S."/>
        </authorList>
    </citation>
    <scope>SUBUNIT</scope>
</reference>
<reference key="5">
    <citation type="journal article" date="1990" name="Virology">
        <title>Negative-strand RNA replication by Q beta and MS2 positive-strand RNA phage replicases.</title>
        <authorList>
            <person name="Shaklee P.N."/>
        </authorList>
    </citation>
    <scope>FUNCTION</scope>
    <scope>CATALYTIC ACTIVITY</scope>
</reference>
<feature type="chain" id="PRO_0000164854" description="RNA-directed RNA polymerase beta chain">
    <location>
        <begin position="1"/>
        <end position="545"/>
    </location>
</feature>
<feature type="domain" description="RdRp catalytic" evidence="1">
    <location>
        <begin position="243"/>
        <end position="373"/>
    </location>
</feature>
<name>RDRP_BPMS2</name>
<evidence type="ECO:0000255" key="1">
    <source>
        <dbReference type="PROSITE-ProRule" id="PRU00539"/>
    </source>
</evidence>
<evidence type="ECO:0000269" key="2">
    <source>
    </source>
</evidence>
<evidence type="ECO:0000305" key="3">
    <source>
    </source>
</evidence>
<evidence type="ECO:0000305" key="4">
    <source>
    </source>
</evidence>
<keyword id="KW-0547">Nucleotide-binding</keyword>
<keyword id="KW-0548">Nucleotidyltransferase</keyword>
<keyword id="KW-1185">Reference proteome</keyword>
<keyword id="KW-0696">RNA-directed RNA polymerase</keyword>
<keyword id="KW-0808">Transferase</keyword>
<keyword id="KW-0693">Viral RNA replication</keyword>
<organism>
    <name type="scientific">Escherichia phage MS2</name>
    <name type="common">Bacteriophage MS2</name>
    <dbReference type="NCBI Taxonomy" id="12022"/>
    <lineage>
        <taxon>Viruses</taxon>
        <taxon>Riboviria</taxon>
        <taxon>Orthornavirae</taxon>
        <taxon>Lenarviricota</taxon>
        <taxon>Leviviricetes</taxon>
        <taxon>Norzivirales</taxon>
        <taxon>Fiersviridae</taxon>
        <taxon>Emesvirus</taxon>
        <taxon>Emesvirus zinderi</taxon>
    </lineage>
</organism>
<protein>
    <recommendedName>
        <fullName>RNA-directed RNA polymerase beta chain</fullName>
        <ecNumber evidence="2">2.7.7.48</ecNumber>
    </recommendedName>
    <alternativeName>
        <fullName>RNA replicase beta chain</fullName>
    </alternativeName>
</protein>